<gene>
    <name type="primary">acyP</name>
    <name type="ordered locus">SSO0887</name>
</gene>
<dbReference type="EC" id="3.6.1.7"/>
<dbReference type="EMBL" id="AE006641">
    <property type="protein sequence ID" value="AAK41170.1"/>
    <property type="molecule type" value="Genomic_DNA"/>
</dbReference>
<dbReference type="PIR" id="C90239">
    <property type="entry name" value="C90239"/>
</dbReference>
<dbReference type="PDB" id="1Y9O">
    <property type="method" value="NMR"/>
    <property type="chains" value="A=1-101"/>
</dbReference>
<dbReference type="PDB" id="2BJD">
    <property type="method" value="X-ray"/>
    <property type="resolution" value="1.27 A"/>
    <property type="chains" value="A/B=1-101"/>
</dbReference>
<dbReference type="PDB" id="2BJE">
    <property type="method" value="X-ray"/>
    <property type="resolution" value="1.90 A"/>
    <property type="chains" value="A/C/E/G=1-101"/>
</dbReference>
<dbReference type="PDB" id="4OIX">
    <property type="method" value="X-ray"/>
    <property type="resolution" value="1.55 A"/>
    <property type="chains" value="A=1-101"/>
</dbReference>
<dbReference type="PDB" id="4OJ1">
    <property type="method" value="X-ray"/>
    <property type="resolution" value="1.70 A"/>
    <property type="chains" value="A/B=1-101"/>
</dbReference>
<dbReference type="PDB" id="4OJ3">
    <property type="method" value="X-ray"/>
    <property type="resolution" value="2.20 A"/>
    <property type="chains" value="A/B=1-101"/>
</dbReference>
<dbReference type="PDB" id="4OJG">
    <property type="method" value="X-ray"/>
    <property type="resolution" value="1.38 A"/>
    <property type="chains" value="A/B=1-101"/>
</dbReference>
<dbReference type="PDB" id="4OJH">
    <property type="method" value="X-ray"/>
    <property type="resolution" value="1.60 A"/>
    <property type="chains" value="A/B=1-101"/>
</dbReference>
<dbReference type="PDBsum" id="1Y9O"/>
<dbReference type="PDBsum" id="2BJD"/>
<dbReference type="PDBsum" id="2BJE"/>
<dbReference type="PDBsum" id="4OIX"/>
<dbReference type="PDBsum" id="4OJ1"/>
<dbReference type="PDBsum" id="4OJ3"/>
<dbReference type="PDBsum" id="4OJG"/>
<dbReference type="PDBsum" id="4OJH"/>
<dbReference type="BMRB" id="Q97ZL0"/>
<dbReference type="SMR" id="Q97ZL0"/>
<dbReference type="FunCoup" id="Q97ZL0">
    <property type="interactions" value="62"/>
</dbReference>
<dbReference type="MINT" id="Q97ZL0"/>
<dbReference type="STRING" id="273057.SSO0887"/>
<dbReference type="PaxDb" id="273057-SSO0887"/>
<dbReference type="EnsemblBacteria" id="AAK41170">
    <property type="protein sequence ID" value="AAK41170"/>
    <property type="gene ID" value="SSO0887"/>
</dbReference>
<dbReference type="KEGG" id="sso:SSO0887"/>
<dbReference type="PATRIC" id="fig|273057.12.peg.891"/>
<dbReference type="eggNOG" id="arCOG01674">
    <property type="taxonomic scope" value="Archaea"/>
</dbReference>
<dbReference type="HOGENOM" id="CLU_141932_2_1_2"/>
<dbReference type="InParanoid" id="Q97ZL0"/>
<dbReference type="PhylomeDB" id="Q97ZL0"/>
<dbReference type="BRENDA" id="3.6.1.7">
    <property type="organism ID" value="6163"/>
</dbReference>
<dbReference type="SABIO-RK" id="Q97ZL0"/>
<dbReference type="EvolutionaryTrace" id="Q97ZL0"/>
<dbReference type="Proteomes" id="UP000001974">
    <property type="component" value="Chromosome"/>
</dbReference>
<dbReference type="GO" id="GO:0003998">
    <property type="term" value="F:acylphosphatase activity"/>
    <property type="evidence" value="ECO:0007669"/>
    <property type="project" value="UniProtKB-EC"/>
</dbReference>
<dbReference type="DisProt" id="DP00513"/>
<dbReference type="FunFam" id="3.30.70.100:FF:000012">
    <property type="entry name" value="Acylphosphatase"/>
    <property type="match status" value="1"/>
</dbReference>
<dbReference type="Gene3D" id="3.30.70.100">
    <property type="match status" value="1"/>
</dbReference>
<dbReference type="InterPro" id="IPR020456">
    <property type="entry name" value="Acylphosphatase"/>
</dbReference>
<dbReference type="InterPro" id="IPR001792">
    <property type="entry name" value="Acylphosphatase-like_dom"/>
</dbReference>
<dbReference type="InterPro" id="IPR036046">
    <property type="entry name" value="Acylphosphatase-like_dom_sf"/>
</dbReference>
<dbReference type="InterPro" id="IPR017968">
    <property type="entry name" value="Acylphosphatase_CS"/>
</dbReference>
<dbReference type="NCBIfam" id="NF011012">
    <property type="entry name" value="PRK14440.1"/>
    <property type="match status" value="1"/>
</dbReference>
<dbReference type="PANTHER" id="PTHR47268">
    <property type="entry name" value="ACYLPHOSPHATASE"/>
    <property type="match status" value="1"/>
</dbReference>
<dbReference type="PANTHER" id="PTHR47268:SF4">
    <property type="entry name" value="ACYLPHOSPHATASE"/>
    <property type="match status" value="1"/>
</dbReference>
<dbReference type="Pfam" id="PF00708">
    <property type="entry name" value="Acylphosphatase"/>
    <property type="match status" value="1"/>
</dbReference>
<dbReference type="SUPFAM" id="SSF54975">
    <property type="entry name" value="Acylphosphatase/BLUF domain-like"/>
    <property type="match status" value="1"/>
</dbReference>
<dbReference type="PROSITE" id="PS00150">
    <property type="entry name" value="ACYLPHOSPHATASE_1"/>
    <property type="match status" value="1"/>
</dbReference>
<dbReference type="PROSITE" id="PS00151">
    <property type="entry name" value="ACYLPHOSPHATASE_2"/>
    <property type="match status" value="1"/>
</dbReference>
<dbReference type="PROSITE" id="PS51160">
    <property type="entry name" value="ACYLPHOSPHATASE_3"/>
    <property type="match status" value="1"/>
</dbReference>
<reference key="1">
    <citation type="journal article" date="2001" name="Proc. Natl. Acad. Sci. U.S.A.">
        <title>The complete genome of the crenarchaeon Sulfolobus solfataricus P2.</title>
        <authorList>
            <person name="She Q."/>
            <person name="Singh R.K."/>
            <person name="Confalonieri F."/>
            <person name="Zivanovic Y."/>
            <person name="Allard G."/>
            <person name="Awayez M.J."/>
            <person name="Chan-Weiher C.C.-Y."/>
            <person name="Clausen I.G."/>
            <person name="Curtis B.A."/>
            <person name="De Moors A."/>
            <person name="Erauso G."/>
            <person name="Fletcher C."/>
            <person name="Gordon P.M.K."/>
            <person name="Heikamp-de Jong I."/>
            <person name="Jeffries A.C."/>
            <person name="Kozera C.J."/>
            <person name="Medina N."/>
            <person name="Peng X."/>
            <person name="Thi-Ngoc H.P."/>
            <person name="Redder P."/>
            <person name="Schenk M.E."/>
            <person name="Theriault C."/>
            <person name="Tolstrup N."/>
            <person name="Charlebois R.L."/>
            <person name="Doolittle W.F."/>
            <person name="Duguet M."/>
            <person name="Gaasterland T."/>
            <person name="Garrett R.A."/>
            <person name="Ragan M.A."/>
            <person name="Sensen C.W."/>
            <person name="Van der Oost J."/>
        </authorList>
    </citation>
    <scope>NUCLEOTIDE SEQUENCE [LARGE SCALE GENOMIC DNA]</scope>
    <source>
        <strain>ATCC 35092 / DSM 1617 / JCM 11322 / P2</strain>
    </source>
</reference>
<reference key="2">
    <citation type="journal article" date="2006" name="Proteins">
        <title>Structure, conformational stability, and enzymatic properties of acylphosphatase from the hyperthermophile Sulfolobus solfataricus.</title>
        <authorList>
            <person name="Corazza A."/>
            <person name="Rosano C."/>
            <person name="Pagano K."/>
            <person name="Alverdi V."/>
            <person name="Esposito G."/>
            <person name="Capanni C."/>
            <person name="Bemporad F."/>
            <person name="Plakoutsi G."/>
            <person name="Stefani M."/>
            <person name="Chiti F."/>
            <person name="Zuccotti S."/>
            <person name="Bolognesi M."/>
            <person name="Viglino P."/>
        </authorList>
    </citation>
    <scope>X-RAY CRYSTALLOGRAPHY (1.27 ANGSTROMS)</scope>
    <scope>STRUCTURE BY NMR</scope>
    <scope>BIOPHYSICOCHEMICAL PROPERTIES</scope>
    <scope>IDENTIFICATION BY MASS SPECTROMETRY</scope>
    <scope>ACTIVE SITE</scope>
</reference>
<evidence type="ECO:0000255" key="1">
    <source>
        <dbReference type="PROSITE-ProRule" id="PRU00520"/>
    </source>
</evidence>
<evidence type="ECO:0000269" key="2">
    <source>
    </source>
</evidence>
<evidence type="ECO:0000305" key="3"/>
<evidence type="ECO:0007829" key="4">
    <source>
        <dbReference type="PDB" id="1Y9O"/>
    </source>
</evidence>
<evidence type="ECO:0007829" key="5">
    <source>
        <dbReference type="PDB" id="2BJD"/>
    </source>
</evidence>
<evidence type="ECO:0007829" key="6">
    <source>
        <dbReference type="PDB" id="4OJ3"/>
    </source>
</evidence>
<name>ACYP_SACS2</name>
<proteinExistence type="evidence at protein level"/>
<protein>
    <recommendedName>
        <fullName>Acylphosphatase</fullName>
        <ecNumber>3.6.1.7</ecNumber>
    </recommendedName>
    <alternativeName>
        <fullName>Acylphosphate phosphohydrolase</fullName>
    </alternativeName>
</protein>
<keyword id="KW-0002">3D-structure</keyword>
<keyword id="KW-0378">Hydrolase</keyword>
<keyword id="KW-1185">Reference proteome</keyword>
<comment type="catalytic activity">
    <reaction>
        <text>an acyl phosphate + H2O = a carboxylate + phosphate + H(+)</text>
        <dbReference type="Rhea" id="RHEA:14965"/>
        <dbReference type="ChEBI" id="CHEBI:15377"/>
        <dbReference type="ChEBI" id="CHEBI:15378"/>
        <dbReference type="ChEBI" id="CHEBI:29067"/>
        <dbReference type="ChEBI" id="CHEBI:43474"/>
        <dbReference type="ChEBI" id="CHEBI:59918"/>
        <dbReference type="EC" id="3.6.1.7"/>
    </reaction>
</comment>
<comment type="biophysicochemical properties">
    <kinetics>
        <KM evidence="2">0.36 mM for benzoylphosphate at 25 degrees Celsius</KM>
    </kinetics>
    <phDependence>
        <text evidence="2">Optimum pH is 4.7-5.7.</text>
    </phDependence>
    <temperatureDependence>
        <text evidence="2">Optimum temperature is 81 degrees Celsius. Thermostable up to 100.8 degrees Celsius. Poorly active at 25 degrees Celsius. Enzymatic activity is increased 4-fold by temperature increase from 25 to 45 degrees Celsius and more than 9-fold at 98 degrees Celsius.</text>
    </temperatureDependence>
</comment>
<comment type="similarity">
    <text evidence="3">Belongs to the acylphosphatase family.</text>
</comment>
<accession>Q97ZL0</accession>
<sequence>MKKWSDTEVFEMLKRMYARVYGLVQGVGFRKFVQIHAIRLGIKGYAKNLPDGSVEVVAEGYEEALSKLLERIKQGPPAAEVEKVDYSFSEYKGEFEDFETY</sequence>
<organism>
    <name type="scientific">Saccharolobus solfataricus (strain ATCC 35092 / DSM 1617 / JCM 11322 / P2)</name>
    <name type="common">Sulfolobus solfataricus</name>
    <dbReference type="NCBI Taxonomy" id="273057"/>
    <lineage>
        <taxon>Archaea</taxon>
        <taxon>Thermoproteota</taxon>
        <taxon>Thermoprotei</taxon>
        <taxon>Sulfolobales</taxon>
        <taxon>Sulfolobaceae</taxon>
        <taxon>Saccharolobus</taxon>
    </lineage>
</organism>
<feature type="chain" id="PRO_0000326870" description="Acylphosphatase">
    <location>
        <begin position="1"/>
        <end position="101"/>
    </location>
</feature>
<feature type="domain" description="Acylphosphatase-like" evidence="1">
    <location>
        <begin position="15"/>
        <end position="101"/>
    </location>
</feature>
<feature type="active site" evidence="2">
    <location>
        <position position="30"/>
    </location>
</feature>
<feature type="active site" evidence="2">
    <location>
        <position position="48"/>
    </location>
</feature>
<feature type="helix" evidence="6">
    <location>
        <begin position="9"/>
        <end position="11"/>
    </location>
</feature>
<feature type="strand" evidence="5">
    <location>
        <begin position="13"/>
        <end position="23"/>
    </location>
</feature>
<feature type="strand" evidence="5">
    <location>
        <begin position="25"/>
        <end position="28"/>
    </location>
</feature>
<feature type="helix" evidence="5">
    <location>
        <begin position="29"/>
        <end position="39"/>
    </location>
</feature>
<feature type="strand" evidence="5">
    <location>
        <begin position="43"/>
        <end position="48"/>
    </location>
</feature>
<feature type="strand" evidence="4">
    <location>
        <begin position="50"/>
        <end position="52"/>
    </location>
</feature>
<feature type="strand" evidence="5">
    <location>
        <begin position="54"/>
        <end position="61"/>
    </location>
</feature>
<feature type="helix" evidence="5">
    <location>
        <begin position="62"/>
        <end position="72"/>
    </location>
</feature>
<feature type="strand" evidence="5">
    <location>
        <begin position="80"/>
        <end position="90"/>
    </location>
</feature>
<feature type="strand" evidence="5">
    <location>
        <begin position="96"/>
        <end position="101"/>
    </location>
</feature>